<gene>
    <name evidence="4" type="primary">RMS3</name>
</gene>
<reference key="1">
    <citation type="journal article" date="2016" name="Nat. Chem. Biol.">
        <title>An histidine covalent receptor and butenolide complex mediates strigolactone perception.</title>
        <authorList>
            <person name="de Saint Germain A."/>
            <person name="Clave G."/>
            <person name="Badet-Denisot M.A."/>
            <person name="Pillot J.P."/>
            <person name="Cornu D."/>
            <person name="Le Caer J.P."/>
            <person name="Burger M."/>
            <person name="Pelissier F."/>
            <person name="Retailleau P."/>
            <person name="Turnbull C."/>
            <person name="Bonhomme S."/>
            <person name="Chory J."/>
            <person name="Rameau C."/>
            <person name="Boyer F.D."/>
        </authorList>
    </citation>
    <scope>NUCLEOTIDE SEQUENCE [GENOMIC DNA]</scope>
    <scope>FUNCTION</scope>
    <scope>MUTAGENESIS OF GLY-15; GLY-28 AND SER-96</scope>
    <scope>DISRUPTION PHENOTYPE</scope>
</reference>
<dbReference type="EC" id="3.1.-.-" evidence="5"/>
<dbReference type="EMBL" id="KT321518">
    <property type="protein sequence ID" value="AMB61024.1"/>
    <property type="molecule type" value="Genomic_DNA"/>
</dbReference>
<dbReference type="EMBL" id="KT321521">
    <property type="protein sequence ID" value="AMB61027.1"/>
    <property type="molecule type" value="Genomic_DNA"/>
</dbReference>
<dbReference type="EMBL" id="KT321524">
    <property type="protein sequence ID" value="AMB61030.1"/>
    <property type="molecule type" value="Genomic_DNA"/>
</dbReference>
<dbReference type="SMR" id="A0A109QYD3"/>
<dbReference type="ESTHER" id="pea-RMS3">
    <property type="family name" value="RsbQ-like"/>
</dbReference>
<dbReference type="OrthoDB" id="408373at2759"/>
<dbReference type="GO" id="GO:0005737">
    <property type="term" value="C:cytoplasm"/>
    <property type="evidence" value="ECO:0007669"/>
    <property type="project" value="UniProtKB-SubCell"/>
</dbReference>
<dbReference type="GO" id="GO:0005634">
    <property type="term" value="C:nucleus"/>
    <property type="evidence" value="ECO:0007669"/>
    <property type="project" value="UniProtKB-SubCell"/>
</dbReference>
<dbReference type="GO" id="GO:0016787">
    <property type="term" value="F:hydrolase activity"/>
    <property type="evidence" value="ECO:0007669"/>
    <property type="project" value="UniProtKB-KW"/>
</dbReference>
<dbReference type="GO" id="GO:1901601">
    <property type="term" value="P:strigolactone biosynthetic process"/>
    <property type="evidence" value="ECO:0000314"/>
    <property type="project" value="UniProtKB"/>
</dbReference>
<dbReference type="FunFam" id="3.40.50.1820:FF:000042">
    <property type="entry name" value="probable strigolactone esterase DAD2"/>
    <property type="match status" value="1"/>
</dbReference>
<dbReference type="Gene3D" id="3.40.50.1820">
    <property type="entry name" value="alpha/beta hydrolase"/>
    <property type="match status" value="1"/>
</dbReference>
<dbReference type="InterPro" id="IPR000073">
    <property type="entry name" value="AB_hydrolase_1"/>
</dbReference>
<dbReference type="InterPro" id="IPR029058">
    <property type="entry name" value="AB_hydrolase_fold"/>
</dbReference>
<dbReference type="PANTHER" id="PTHR43039">
    <property type="entry name" value="ESTERASE-RELATED"/>
    <property type="match status" value="1"/>
</dbReference>
<dbReference type="Pfam" id="PF12697">
    <property type="entry name" value="Abhydrolase_6"/>
    <property type="match status" value="1"/>
</dbReference>
<dbReference type="SUPFAM" id="SSF53474">
    <property type="entry name" value="alpha/beta-Hydrolases"/>
    <property type="match status" value="1"/>
</dbReference>
<feature type="chain" id="PRO_0000437987" description="Strigolactone esterase RMS3">
    <location>
        <begin position="1"/>
        <end position="267"/>
    </location>
</feature>
<feature type="active site" description="Nucleophile" evidence="1">
    <location>
        <position position="96"/>
    </location>
</feature>
<feature type="active site" evidence="1">
    <location>
        <position position="218"/>
    </location>
</feature>
<feature type="active site" evidence="1">
    <location>
        <position position="247"/>
    </location>
</feature>
<feature type="mutagenesis site" description="In rms3-3; ramosus phenotype, reduced plant height and extensive vegetative branching from both basal and aerial nodes." evidence="3">
    <original>G</original>
    <variation>D</variation>
    <location>
        <position position="15"/>
    </location>
</feature>
<feature type="mutagenesis site" description="In rms3-4; ramosus phenotype, reduced plant height and extensive vegetative branching from both basal and aerial nodes." evidence="3">
    <original>G</original>
    <variation>D</variation>
    <location>
        <position position="28"/>
    </location>
</feature>
<feature type="mutagenesis site" description="In rms3-5; loss of esterase activity. Ramosus phenotype, reduced plant height and extensive vegetative branching from both basal and aerial nodes." evidence="3">
    <original>S</original>
    <variation>F</variation>
    <location>
        <position position="96"/>
    </location>
</feature>
<comment type="function">
    <text evidence="3 6">Involved in strigolactone signaling pathway. Functions downstream of strigolactone synthesis, as a component of hormone signaling and as an enzyme that participates in the conversion of strigolactones to the bioactive form. Binds and hydrolyzes the synthetic strigolactone analog GR24 and its enantiomers in vitro. Forms a stable covalent complex with the D-ring of strigolactone, which is essential for hormone bioactivity. The D-ring is attached to His-247 of the catalytic triad. The hydrolysis of strigolactone into a covalently linked intermediate molecule is required to trigger strigolactone signaling. This mechanism defines RMS3 as a non-canonical hormone receptor with dual functions to generate and sense the active form of strigolactone (PubMed:27479744). Strigolactones are hormones that inhibit tillering and shoot branching through the MAX-dependent pathway, contribute to the regulation of shoot architectural response to phosphate-limiting conditions and function as rhizosphere signal that stimulates hyphal branching of arbuscular mycorrhizal fungi and trigger seed germination of root parasitic weeds (Probable).</text>
</comment>
<comment type="subcellular location">
    <subcellularLocation>
        <location evidence="2">Cytoplasm</location>
    </subcellularLocation>
    <subcellularLocation>
        <location evidence="2">Nucleus</location>
    </subcellularLocation>
</comment>
<comment type="disruption phenotype">
    <text evidence="3">Reduced plant height and extensive vegetative branching from both basal and aerial nodes.</text>
</comment>
<comment type="similarity">
    <text evidence="5">Belongs to the AB hydrolase superfamily.</text>
</comment>
<accession>A0A109QYD3</accession>
<keyword id="KW-0963">Cytoplasm</keyword>
<keyword id="KW-0378">Hydrolase</keyword>
<keyword id="KW-0539">Nucleus</keyword>
<proteinExistence type="evidence at protein level"/>
<protein>
    <recommendedName>
        <fullName evidence="5">Strigolactone esterase RMS3</fullName>
        <ecNumber evidence="5">3.1.-.-</ecNumber>
    </recommendedName>
    <alternativeName>
        <fullName evidence="5">Protein DWARF 14 homolog</fullName>
        <shortName evidence="4">PsD14</shortName>
    </alternativeName>
    <alternativeName>
        <fullName evidence="4">Protein RAMOSUS 3</fullName>
    </alternativeName>
</protein>
<evidence type="ECO:0000250" key="1">
    <source>
        <dbReference type="UniProtKB" id="Q10QA5"/>
    </source>
</evidence>
<evidence type="ECO:0000250" key="2">
    <source>
        <dbReference type="UniProtKB" id="Q9SQR3"/>
    </source>
</evidence>
<evidence type="ECO:0000269" key="3">
    <source>
    </source>
</evidence>
<evidence type="ECO:0000303" key="4">
    <source>
    </source>
</evidence>
<evidence type="ECO:0000305" key="5"/>
<evidence type="ECO:0000305" key="6">
    <source>
    </source>
</evidence>
<organism>
    <name type="scientific">Pisum sativum</name>
    <name type="common">Garden pea</name>
    <name type="synonym">Lathyrus oleraceus</name>
    <dbReference type="NCBI Taxonomy" id="3888"/>
    <lineage>
        <taxon>Eukaryota</taxon>
        <taxon>Viridiplantae</taxon>
        <taxon>Streptophyta</taxon>
        <taxon>Embryophyta</taxon>
        <taxon>Tracheophyta</taxon>
        <taxon>Spermatophyta</taxon>
        <taxon>Magnoliopsida</taxon>
        <taxon>eudicotyledons</taxon>
        <taxon>Gunneridae</taxon>
        <taxon>Pentapetalae</taxon>
        <taxon>rosids</taxon>
        <taxon>fabids</taxon>
        <taxon>Fabales</taxon>
        <taxon>Fabaceae</taxon>
        <taxon>Papilionoideae</taxon>
        <taxon>50 kb inversion clade</taxon>
        <taxon>NPAAA clade</taxon>
        <taxon>Hologalegina</taxon>
        <taxon>IRL clade</taxon>
        <taxon>Fabeae</taxon>
        <taxon>Pisum</taxon>
    </lineage>
</organism>
<name>RMS3_PEA</name>
<sequence length="267" mass="29647">MGTPILDAFNVRVEGSGDKYLVFAHGFGTDQSAWQRVLPYFTRSYKVILYDLVCAGSVNPDHFDFRRYTTLDAYVDDLLNILDSLHVTRCAYVGHSISAMTGMLASIRRPELFSKLILIGASPRFLNDGENYHGGFEQGEIEHVFSAMEANYEAWVNGFAPLAVGADVPTAVREFSRTLFNMRPDISLFVSRTVFNSDLRGILGLVNVPCCIMQTARDMSVPASVATYMKEHIGGKSTVQWLDTEGHLPHLSAPSYLAHQLEIALSQ</sequence>